<accession>P45306</accession>
<reference key="1">
    <citation type="journal article" date="1995" name="Science">
        <title>Whole-genome random sequencing and assembly of Haemophilus influenzae Rd.</title>
        <authorList>
            <person name="Fleischmann R.D."/>
            <person name="Adams M.D."/>
            <person name="White O."/>
            <person name="Clayton R.A."/>
            <person name="Kirkness E.F."/>
            <person name="Kerlavage A.R."/>
            <person name="Bult C.J."/>
            <person name="Tomb J.-F."/>
            <person name="Dougherty B.A."/>
            <person name="Merrick J.M."/>
            <person name="McKenney K."/>
            <person name="Sutton G.G."/>
            <person name="FitzHugh W."/>
            <person name="Fields C.A."/>
            <person name="Gocayne J.D."/>
            <person name="Scott J.D."/>
            <person name="Shirley R."/>
            <person name="Liu L.-I."/>
            <person name="Glodek A."/>
            <person name="Kelley J.M."/>
            <person name="Weidman J.F."/>
            <person name="Phillips C.A."/>
            <person name="Spriggs T."/>
            <person name="Hedblom E."/>
            <person name="Cotton M.D."/>
            <person name="Utterback T.R."/>
            <person name="Hanna M.C."/>
            <person name="Nguyen D.T."/>
            <person name="Saudek D.M."/>
            <person name="Brandon R.C."/>
            <person name="Fine L.D."/>
            <person name="Fritchman J.L."/>
            <person name="Fuhrmann J.L."/>
            <person name="Geoghagen N.S.M."/>
            <person name="Gnehm C.L."/>
            <person name="McDonald L.A."/>
            <person name="Small K.V."/>
            <person name="Fraser C.M."/>
            <person name="Smith H.O."/>
            <person name="Venter J.C."/>
        </authorList>
    </citation>
    <scope>NUCLEOTIDE SEQUENCE [LARGE SCALE GENOMIC DNA]</scope>
    <source>
        <strain>ATCC 51907 / DSM 11121 / KW20 / Rd</strain>
    </source>
</reference>
<protein>
    <recommendedName>
        <fullName>Tail-specific protease</fullName>
        <ecNumber>3.4.21.102</ecNumber>
    </recommendedName>
    <alternativeName>
        <fullName>C-terminal-processing peptidase</fullName>
    </alternativeName>
    <alternativeName>
        <fullName>Protease Re</fullName>
    </alternativeName>
</protein>
<comment type="function">
    <text evidence="1">Involved in the cleavage of a C-terminal peptide of 11 residues from the precursor form of penicillin-binding protein 3 (PBP3). May be involved in protection of the bacterium from thermal and osmotic stresses (By similarity).</text>
</comment>
<comment type="catalytic activity">
    <reaction>
        <text>The enzyme shows specific recognition of a C-terminal tripeptide, Xaa-Yaa-Zaa, in which Xaa is preferably Ala or Leu, Yaa is preferably Ala or Tyr, and Zaa is preferably Ala, but then cleaves at a variable distance from the C-terminus. A typical cleavage is -Ala-Ala-|-Arg-Ala-Ala-Lys-Glu-Asn-Tyr-Ala-Leu-Ala-Ala.</text>
        <dbReference type="EC" id="3.4.21.102"/>
    </reaction>
</comment>
<comment type="subcellular location">
    <subcellularLocation>
        <location>Cell inner membrane</location>
        <topology>Peripheral membrane protein</topology>
        <orientation>Periplasmic side</orientation>
    </subcellularLocation>
</comment>
<comment type="similarity">
    <text evidence="4">Belongs to the peptidase S41A family.</text>
</comment>
<evidence type="ECO:0000250" key="1"/>
<evidence type="ECO:0000255" key="2"/>
<evidence type="ECO:0000255" key="3">
    <source>
        <dbReference type="PROSITE-ProRule" id="PRU00143"/>
    </source>
</evidence>
<evidence type="ECO:0000305" key="4"/>
<name>PRC_HAEIN</name>
<gene>
    <name type="primary">prc</name>
    <name type="ordered locus">HI_1668</name>
</gene>
<dbReference type="EC" id="3.4.21.102"/>
<dbReference type="EMBL" id="L42023">
    <property type="protein sequence ID" value="AAC23314.1"/>
    <property type="molecule type" value="Genomic_DNA"/>
</dbReference>
<dbReference type="PIR" id="F64135">
    <property type="entry name" value="F64135"/>
</dbReference>
<dbReference type="RefSeq" id="NP_439810.1">
    <property type="nucleotide sequence ID" value="NC_000907.1"/>
</dbReference>
<dbReference type="SMR" id="P45306"/>
<dbReference type="STRING" id="71421.HI_1668"/>
<dbReference type="MEROPS" id="S41.001"/>
<dbReference type="EnsemblBacteria" id="AAC23314">
    <property type="protein sequence ID" value="AAC23314"/>
    <property type="gene ID" value="HI_1668"/>
</dbReference>
<dbReference type="KEGG" id="hin:HI_1668"/>
<dbReference type="PATRIC" id="fig|71421.8.peg.1746"/>
<dbReference type="eggNOG" id="COG0793">
    <property type="taxonomic scope" value="Bacteria"/>
</dbReference>
<dbReference type="HOGENOM" id="CLU_016199_1_0_6"/>
<dbReference type="OrthoDB" id="9812068at2"/>
<dbReference type="PhylomeDB" id="P45306"/>
<dbReference type="BioCyc" id="HINF71421:G1GJ1-1684-MONOMER"/>
<dbReference type="Proteomes" id="UP000000579">
    <property type="component" value="Chromosome"/>
</dbReference>
<dbReference type="GO" id="GO:0030288">
    <property type="term" value="C:outer membrane-bounded periplasmic space"/>
    <property type="evidence" value="ECO:0000318"/>
    <property type="project" value="GO_Central"/>
</dbReference>
<dbReference type="GO" id="GO:0005886">
    <property type="term" value="C:plasma membrane"/>
    <property type="evidence" value="ECO:0007669"/>
    <property type="project" value="UniProtKB-SubCell"/>
</dbReference>
<dbReference type="GO" id="GO:0004175">
    <property type="term" value="F:endopeptidase activity"/>
    <property type="evidence" value="ECO:0000318"/>
    <property type="project" value="GO_Central"/>
</dbReference>
<dbReference type="GO" id="GO:0004252">
    <property type="term" value="F:serine-type endopeptidase activity"/>
    <property type="evidence" value="ECO:0007669"/>
    <property type="project" value="UniProtKB-EC"/>
</dbReference>
<dbReference type="GO" id="GO:0006508">
    <property type="term" value="P:proteolysis"/>
    <property type="evidence" value="ECO:0007669"/>
    <property type="project" value="UniProtKB-KW"/>
</dbReference>
<dbReference type="GO" id="GO:0007165">
    <property type="term" value="P:signal transduction"/>
    <property type="evidence" value="ECO:0000318"/>
    <property type="project" value="GO_Central"/>
</dbReference>
<dbReference type="CDD" id="cd06782">
    <property type="entry name" value="cpPDZ_CPP-like"/>
    <property type="match status" value="1"/>
</dbReference>
<dbReference type="CDD" id="cd07560">
    <property type="entry name" value="Peptidase_S41_CPP"/>
    <property type="match status" value="1"/>
</dbReference>
<dbReference type="Gene3D" id="2.30.42.10">
    <property type="match status" value="1"/>
</dbReference>
<dbReference type="Gene3D" id="3.30.750.44">
    <property type="match status" value="1"/>
</dbReference>
<dbReference type="Gene3D" id="3.90.226.10">
    <property type="entry name" value="2-enoyl-CoA Hydratase, Chain A, domain 1"/>
    <property type="match status" value="1"/>
</dbReference>
<dbReference type="InterPro" id="IPR029045">
    <property type="entry name" value="ClpP/crotonase-like_dom_sf"/>
</dbReference>
<dbReference type="InterPro" id="IPR001478">
    <property type="entry name" value="PDZ"/>
</dbReference>
<dbReference type="InterPro" id="IPR036034">
    <property type="entry name" value="PDZ_sf"/>
</dbReference>
<dbReference type="InterPro" id="IPR004447">
    <property type="entry name" value="Peptidase_S41A"/>
</dbReference>
<dbReference type="InterPro" id="IPR005151">
    <property type="entry name" value="Tail-specific_protease"/>
</dbReference>
<dbReference type="InterPro" id="IPR020992">
    <property type="entry name" value="Tail_Prtase_C"/>
</dbReference>
<dbReference type="InterPro" id="IPR040573">
    <property type="entry name" value="TSP_N"/>
</dbReference>
<dbReference type="NCBIfam" id="TIGR00225">
    <property type="entry name" value="prc"/>
    <property type="match status" value="1"/>
</dbReference>
<dbReference type="NCBIfam" id="NF008388">
    <property type="entry name" value="PRK11186.1"/>
    <property type="match status" value="1"/>
</dbReference>
<dbReference type="PANTHER" id="PTHR32060:SF22">
    <property type="entry name" value="CARBOXYL-TERMINAL-PROCESSING PEPTIDASE 3, CHLOROPLASTIC"/>
    <property type="match status" value="1"/>
</dbReference>
<dbReference type="PANTHER" id="PTHR32060">
    <property type="entry name" value="TAIL-SPECIFIC PROTEASE"/>
    <property type="match status" value="1"/>
</dbReference>
<dbReference type="Pfam" id="PF11818">
    <property type="entry name" value="DUF3340"/>
    <property type="match status" value="1"/>
</dbReference>
<dbReference type="Pfam" id="PF00595">
    <property type="entry name" value="PDZ"/>
    <property type="match status" value="1"/>
</dbReference>
<dbReference type="Pfam" id="PF03572">
    <property type="entry name" value="Peptidase_S41"/>
    <property type="match status" value="1"/>
</dbReference>
<dbReference type="Pfam" id="PF17804">
    <property type="entry name" value="TSP_NTD"/>
    <property type="match status" value="1"/>
</dbReference>
<dbReference type="SMART" id="SM00228">
    <property type="entry name" value="PDZ"/>
    <property type="match status" value="1"/>
</dbReference>
<dbReference type="SMART" id="SM00245">
    <property type="entry name" value="TSPc"/>
    <property type="match status" value="1"/>
</dbReference>
<dbReference type="SUPFAM" id="SSF52096">
    <property type="entry name" value="ClpP/crotonase"/>
    <property type="match status" value="1"/>
</dbReference>
<dbReference type="SUPFAM" id="SSF50156">
    <property type="entry name" value="PDZ domain-like"/>
    <property type="match status" value="1"/>
</dbReference>
<dbReference type="PROSITE" id="PS50106">
    <property type="entry name" value="PDZ"/>
    <property type="match status" value="1"/>
</dbReference>
<sequence length="695" mass="78870">MVMKFKMSKNVICYTWLSVCLSSAIPAFAVQPTLKPSDISIPAISEESQLATKRATTRLTQSHYRKIKLDDDFSEKIFDRYIKNLDFNHNTFLQSDIDELRQKYGTKLDEQLNQGDLSAAFDIYDVMMKRRYERYTYALSLLDKEPDLNGQDQIEIDREKAAAPQTEADANKLWDARVKNDIINLKLKDKKWSEIKAKLTKRYNLAIRRLTQTKADDIVQIYLNAFAREIDPHTSYLSPRTAKSFNESINLSLEGIGTTLQSEDDEISIKSLVPGAPAERSKKLHPGDKIIGVGQATGDIEDVVGWRLEDLVEKIKGKKGTKVRLEIEPAKGGKSRIITLVRDKVRIEDQAAKLTFEKVSGKNIAVIKIPSFYIGLTEDVKKLLVKLENQKAEALIVDLRENGGGALTEAVALSGLFITDGPVVQVRDAYQRIRVHEDDDATQQYKGLLFVMINRYSASASEIFAAAMQDYRRGIIIGQNTFGKGTVQQSRSLNFIYDLDQSPLGVLQYTIQKFYRVNGGSTQLKGVAADINFPEIIDAKEYGEDKEDNALAWDKIPSASYMEVGNINYIDNAVNILNEKHLARIAKDPEFVALNEELKVRNERRDRKFLSLNYKMRKAENDKDDARRLKDLNERFKREGKKALKDIDDLPKDYEAPDFFLKEAEKIAADFVIFNSDQKINQANGLSEAKTESKK</sequence>
<organism>
    <name type="scientific">Haemophilus influenzae (strain ATCC 51907 / DSM 11121 / KW20 / Rd)</name>
    <dbReference type="NCBI Taxonomy" id="71421"/>
    <lineage>
        <taxon>Bacteria</taxon>
        <taxon>Pseudomonadati</taxon>
        <taxon>Pseudomonadota</taxon>
        <taxon>Gammaproteobacteria</taxon>
        <taxon>Pasteurellales</taxon>
        <taxon>Pasteurellaceae</taxon>
        <taxon>Haemophilus</taxon>
    </lineage>
</organism>
<feature type="signal peptide" evidence="2">
    <location>
        <begin position="1"/>
        <end position="29"/>
    </location>
</feature>
<feature type="chain" id="PRO_0000027333" description="Tail-specific protease">
    <location>
        <begin position="30"/>
        <end position="695"/>
    </location>
</feature>
<feature type="domain" description="PDZ" evidence="3">
    <location>
        <begin position="256"/>
        <end position="316"/>
    </location>
</feature>
<feature type="active site" description="Charge relay system" evidence="1">
    <location>
        <position position="459"/>
    </location>
</feature>
<feature type="active site" description="Charge relay system" evidence="1">
    <location>
        <position position="470"/>
    </location>
</feature>
<feature type="active site" description="Charge relay system" evidence="1">
    <location>
        <position position="484"/>
    </location>
</feature>
<proteinExistence type="inferred from homology"/>
<keyword id="KW-0997">Cell inner membrane</keyword>
<keyword id="KW-1003">Cell membrane</keyword>
<keyword id="KW-0378">Hydrolase</keyword>
<keyword id="KW-0472">Membrane</keyword>
<keyword id="KW-0645">Protease</keyword>
<keyword id="KW-1185">Reference proteome</keyword>
<keyword id="KW-0720">Serine protease</keyword>
<keyword id="KW-0732">Signal</keyword>